<gene>
    <name evidence="21" type="primary">cav</name>
    <name evidence="20 21" type="synonym">anon fe 1G5</name>
    <name evidence="18" type="synonym">anon1G5</name>
    <name evidence="20" type="synonym">Hoap</name>
    <name evidence="22" type="synonym">IG5</name>
    <name evidence="68" type="ORF">CG6219</name>
</gene>
<reference evidence="23 37" key="1">
    <citation type="journal article" date="1997" name="Proc. Natl. Acad. Sci. U.S.A.">
        <title>A screen for fast evolving genes from Drosophila.</title>
        <authorList>
            <person name="Schmid K.J."/>
            <person name="Tautz D."/>
        </authorList>
    </citation>
    <scope>NUCLEOTIDE SEQUENCE [MRNA] (ISOFORM B)</scope>
    <scope>NUCLEOTIDE SEQUENCE [GENOMIC DNA] OF 28-293</scope>
    <scope>VARIANTS THR-144; CYS-149; THR-154; ILE-198; TYR-236 AND PHE-273</scope>
    <source>
        <strain evidence="24">Australia 2</strain>
        <strain evidence="25">Australia 4</strain>
        <strain evidence="26">Australia 5</strain>
        <strain evidence="27">Canada</strain>
        <strain evidence="37">Canton-S</strain>
        <strain evidence="28">Cyprus</strain>
        <strain evidence="29">Irak</strain>
        <strain evidence="30">Italy</strain>
        <strain evidence="31">Japan</strain>
        <strain evidence="32">Peru</strain>
        <strain evidence="33">USA 1</strain>
        <strain evidence="34">USA 2</strain>
        <strain evidence="35">USA 3</strain>
        <strain evidence="36">USSR 1</strain>
    </source>
</reference>
<reference evidence="42" key="2">
    <citation type="journal article" date="2000" name="Science">
        <title>The genome sequence of Drosophila melanogaster.</title>
        <authorList>
            <person name="Adams M.D."/>
            <person name="Celniker S.E."/>
            <person name="Holt R.A."/>
            <person name="Evans C.A."/>
            <person name="Gocayne J.D."/>
            <person name="Amanatides P.G."/>
            <person name="Scherer S.E."/>
            <person name="Li P.W."/>
            <person name="Hoskins R.A."/>
            <person name="Galle R.F."/>
            <person name="George R.A."/>
            <person name="Lewis S.E."/>
            <person name="Richards S."/>
            <person name="Ashburner M."/>
            <person name="Henderson S.N."/>
            <person name="Sutton G.G."/>
            <person name="Wortman J.R."/>
            <person name="Yandell M.D."/>
            <person name="Zhang Q."/>
            <person name="Chen L.X."/>
            <person name="Brandon R.C."/>
            <person name="Rogers Y.-H.C."/>
            <person name="Blazej R.G."/>
            <person name="Champe M."/>
            <person name="Pfeiffer B.D."/>
            <person name="Wan K.H."/>
            <person name="Doyle C."/>
            <person name="Baxter E.G."/>
            <person name="Helt G."/>
            <person name="Nelson C.R."/>
            <person name="Miklos G.L.G."/>
            <person name="Abril J.F."/>
            <person name="Agbayani A."/>
            <person name="An H.-J."/>
            <person name="Andrews-Pfannkoch C."/>
            <person name="Baldwin D."/>
            <person name="Ballew R.M."/>
            <person name="Basu A."/>
            <person name="Baxendale J."/>
            <person name="Bayraktaroglu L."/>
            <person name="Beasley E.M."/>
            <person name="Beeson K.Y."/>
            <person name="Benos P.V."/>
            <person name="Berman B.P."/>
            <person name="Bhandari D."/>
            <person name="Bolshakov S."/>
            <person name="Borkova D."/>
            <person name="Botchan M.R."/>
            <person name="Bouck J."/>
            <person name="Brokstein P."/>
            <person name="Brottier P."/>
            <person name="Burtis K.C."/>
            <person name="Busam D.A."/>
            <person name="Butler H."/>
            <person name="Cadieu E."/>
            <person name="Center A."/>
            <person name="Chandra I."/>
            <person name="Cherry J.M."/>
            <person name="Cawley S."/>
            <person name="Dahlke C."/>
            <person name="Davenport L.B."/>
            <person name="Davies P."/>
            <person name="de Pablos B."/>
            <person name="Delcher A."/>
            <person name="Deng Z."/>
            <person name="Mays A.D."/>
            <person name="Dew I."/>
            <person name="Dietz S.M."/>
            <person name="Dodson K."/>
            <person name="Doup L.E."/>
            <person name="Downes M."/>
            <person name="Dugan-Rocha S."/>
            <person name="Dunkov B.C."/>
            <person name="Dunn P."/>
            <person name="Durbin K.J."/>
            <person name="Evangelista C.C."/>
            <person name="Ferraz C."/>
            <person name="Ferriera S."/>
            <person name="Fleischmann W."/>
            <person name="Fosler C."/>
            <person name="Gabrielian A.E."/>
            <person name="Garg N.S."/>
            <person name="Gelbart W.M."/>
            <person name="Glasser K."/>
            <person name="Glodek A."/>
            <person name="Gong F."/>
            <person name="Gorrell J.H."/>
            <person name="Gu Z."/>
            <person name="Guan P."/>
            <person name="Harris M."/>
            <person name="Harris N.L."/>
            <person name="Harvey D.A."/>
            <person name="Heiman T.J."/>
            <person name="Hernandez J.R."/>
            <person name="Houck J."/>
            <person name="Hostin D."/>
            <person name="Houston K.A."/>
            <person name="Howland T.J."/>
            <person name="Wei M.-H."/>
            <person name="Ibegwam C."/>
            <person name="Jalali M."/>
            <person name="Kalush F."/>
            <person name="Karpen G.H."/>
            <person name="Ke Z."/>
            <person name="Kennison J.A."/>
            <person name="Ketchum K.A."/>
            <person name="Kimmel B.E."/>
            <person name="Kodira C.D."/>
            <person name="Kraft C.L."/>
            <person name="Kravitz S."/>
            <person name="Kulp D."/>
            <person name="Lai Z."/>
            <person name="Lasko P."/>
            <person name="Lei Y."/>
            <person name="Levitsky A.A."/>
            <person name="Li J.H."/>
            <person name="Li Z."/>
            <person name="Liang Y."/>
            <person name="Lin X."/>
            <person name="Liu X."/>
            <person name="Mattei B."/>
            <person name="McIntosh T.C."/>
            <person name="McLeod M.P."/>
            <person name="McPherson D."/>
            <person name="Merkulov G."/>
            <person name="Milshina N.V."/>
            <person name="Mobarry C."/>
            <person name="Morris J."/>
            <person name="Moshrefi A."/>
            <person name="Mount S.M."/>
            <person name="Moy M."/>
            <person name="Murphy B."/>
            <person name="Murphy L."/>
            <person name="Muzny D.M."/>
            <person name="Nelson D.L."/>
            <person name="Nelson D.R."/>
            <person name="Nelson K.A."/>
            <person name="Nixon K."/>
            <person name="Nusskern D.R."/>
            <person name="Pacleb J.M."/>
            <person name="Palazzolo M."/>
            <person name="Pittman G.S."/>
            <person name="Pan S."/>
            <person name="Pollard J."/>
            <person name="Puri V."/>
            <person name="Reese M.G."/>
            <person name="Reinert K."/>
            <person name="Remington K."/>
            <person name="Saunders R.D.C."/>
            <person name="Scheeler F."/>
            <person name="Shen H."/>
            <person name="Shue B.C."/>
            <person name="Siden-Kiamos I."/>
            <person name="Simpson M."/>
            <person name="Skupski M.P."/>
            <person name="Smith T.J."/>
            <person name="Spier E."/>
            <person name="Spradling A.C."/>
            <person name="Stapleton M."/>
            <person name="Strong R."/>
            <person name="Sun E."/>
            <person name="Svirskas R."/>
            <person name="Tector C."/>
            <person name="Turner R."/>
            <person name="Venter E."/>
            <person name="Wang A.H."/>
            <person name="Wang X."/>
            <person name="Wang Z.-Y."/>
            <person name="Wassarman D.A."/>
            <person name="Weinstock G.M."/>
            <person name="Weissenbach J."/>
            <person name="Williams S.M."/>
            <person name="Woodage T."/>
            <person name="Worley K.C."/>
            <person name="Wu D."/>
            <person name="Yang S."/>
            <person name="Yao Q.A."/>
            <person name="Ye J."/>
            <person name="Yeh R.-F."/>
            <person name="Zaveri J.S."/>
            <person name="Zhan M."/>
            <person name="Zhang G."/>
            <person name="Zhao Q."/>
            <person name="Zheng L."/>
            <person name="Zheng X.H."/>
            <person name="Zhong F.N."/>
            <person name="Zhong W."/>
            <person name="Zhou X."/>
            <person name="Zhu S.C."/>
            <person name="Zhu X."/>
            <person name="Smith H.O."/>
            <person name="Gibbs R.A."/>
            <person name="Myers E.W."/>
            <person name="Rubin G.M."/>
            <person name="Venter J.C."/>
        </authorList>
    </citation>
    <scope>NUCLEOTIDE SEQUENCE [LARGE SCALE GENOMIC DNA]</scope>
    <source>
        <strain>Berkeley</strain>
    </source>
</reference>
<reference evidence="23 42" key="3">
    <citation type="journal article" date="2002" name="Genome Biol.">
        <title>Annotation of the Drosophila melanogaster euchromatic genome: a systematic review.</title>
        <authorList>
            <person name="Misra S."/>
            <person name="Crosby M.A."/>
            <person name="Mungall C.J."/>
            <person name="Matthews B.B."/>
            <person name="Campbell K.S."/>
            <person name="Hradecky P."/>
            <person name="Huang Y."/>
            <person name="Kaminker J.S."/>
            <person name="Millburn G.H."/>
            <person name="Prochnik S.E."/>
            <person name="Smith C.D."/>
            <person name="Tupy J.L."/>
            <person name="Whitfield E.J."/>
            <person name="Bayraktaroglu L."/>
            <person name="Berman B.P."/>
            <person name="Bettencourt B.R."/>
            <person name="Celniker S.E."/>
            <person name="de Grey A.D.N.J."/>
            <person name="Drysdale R.A."/>
            <person name="Harris N.L."/>
            <person name="Richter J."/>
            <person name="Russo S."/>
            <person name="Schroeder A.J."/>
            <person name="Shu S.Q."/>
            <person name="Stapleton M."/>
            <person name="Yamada C."/>
            <person name="Ashburner M."/>
            <person name="Gelbart W.M."/>
            <person name="Rubin G.M."/>
            <person name="Lewis S.E."/>
        </authorList>
    </citation>
    <scope>GENOME REANNOTATION</scope>
    <scope>ALTERNATIVE SPLICING</scope>
    <source>
        <strain>Berkeley</strain>
    </source>
</reference>
<reference evidence="23 41" key="4">
    <citation type="journal article" date="2002" name="Genome Biol.">
        <title>A Drosophila full-length cDNA resource.</title>
        <authorList>
            <person name="Stapleton M."/>
            <person name="Carlson J.W."/>
            <person name="Brokstein P."/>
            <person name="Yu C."/>
            <person name="Champe M."/>
            <person name="George R.A."/>
            <person name="Guarin H."/>
            <person name="Kronmiller B."/>
            <person name="Pacleb J.M."/>
            <person name="Park S."/>
            <person name="Wan K.H."/>
            <person name="Rubin G.M."/>
            <person name="Celniker S.E."/>
        </authorList>
    </citation>
    <scope>NUCLEOTIDE SEQUENCE [LARGE SCALE MRNA] (ISOFORM A)</scope>
    <source>
        <strain evidence="41">Berkeley</strain>
        <tissue evidence="7">Embryo</tissue>
    </source>
</reference>
<reference evidence="23 43" key="5">
    <citation type="journal article" date="2009" name="Genetics">
        <title>Molecular population genetics and evolution of Drosophila meiosis genes.</title>
        <authorList>
            <person name="Anderson J.A."/>
            <person name="Gilliland W.D."/>
            <person name="Langley C.H."/>
        </authorList>
    </citation>
    <scope>NUCLEOTIDE SEQUENCE [GENOMIC DNA] OF 1-149</scope>
    <scope>VARIANT ASN-27</scope>
    <source>
        <strain evidence="43">MW11</strain>
        <strain evidence="58">MW38</strain>
        <strain evidence="62">MW56</strain>
        <strain evidence="63">MW6</strain>
        <strain evidence="64">MW63</strain>
        <strain evidence="67">MW9</strain>
        <strain evidence="44">NC301</strain>
        <strain evidence="45">NC303</strain>
        <strain evidence="46">NC304</strain>
        <strain evidence="47">NC306</strain>
        <strain evidence="48">NC319</strain>
        <strain evidence="49">NC322</strain>
        <strain evidence="50">NC336</strain>
        <strain evidence="51">NC350</strain>
        <strain evidence="52">NC357</strain>
        <strain evidence="53">NC358</strain>
        <strain evidence="54">NC359</strain>
        <strain evidence="55">NC361</strain>
        <strain evidence="56">NC362</strain>
        <strain evidence="57">NC375</strain>
        <strain evidence="59">NC390</strain>
        <strain evidence="60">NC397</strain>
        <strain evidence="61">NC399</strain>
        <strain evidence="65">NC732</strain>
        <strain evidence="66">NC774</strain>
    </source>
</reference>
<reference evidence="23 40" key="6">
    <citation type="journal article" date="1999" name="Genetics">
        <title>Large number of replacement polymorphisms in rapidly evolving genes of Drosophila. Implications for genome-wide surveys of DNA polymorphism.</title>
        <authorList>
            <person name="Schmid K.J."/>
            <person name="Nigro L."/>
            <person name="Aquadro C.F."/>
            <person name="Tautz D."/>
        </authorList>
    </citation>
    <scope>NUCLEOTIDE SEQUENCE [GENOMIC DNA] OF 38-293</scope>
    <scope>VARIANT THR-154</scope>
    <source>
        <strain evidence="38">Kenya 38</strain>
        <strain evidence="39">Kenya 43</strain>
        <strain evidence="40">Oregon-R</strain>
    </source>
</reference>
<reference evidence="23" key="7">
    <citation type="journal article" date="2001" name="Mol. Biol. Cell">
        <title>Drosophila heterochromatin protein 1 (HP1)/origin recognition complex (ORC) protein is associated with HP1 and ORC and functions in heterochromatin-induced silencing.</title>
        <authorList>
            <person name="Shareef M.M."/>
            <person name="King C."/>
            <person name="Damaj M."/>
            <person name="Badagu R."/>
            <person name="Huang D.W."/>
            <person name="Kellum R."/>
        </authorList>
    </citation>
    <scope>PROTEIN SEQUENCE OF 13-24 AND 50-64</scope>
    <scope>FUNCTION</scope>
    <scope>INTERACTION WITH SU(VAR)205</scope>
    <scope>SUBCELLULAR LOCATION</scope>
    <scope>DEVELOPMENTAL STAGE</scope>
</reference>
<reference evidence="23" key="8">
    <citation type="journal article" date="2003" name="J. Biol. Chem.">
        <title>Novel Drosophila heterochromatin protein 1 (HP1)/origin recognition complex-associated protein (HOAP) repeat motif in HP1/HOAP interactions and chromocenter associations.</title>
        <authorList>
            <person name="Badugu R."/>
            <person name="Shareef M.M."/>
            <person name="Kellum R."/>
        </authorList>
    </citation>
    <scope>FUNCTION</scope>
    <scope>SUBCELLULAR LOCATION</scope>
    <scope>INTERACTION WITH SU(VAR)205 AND ORC1</scope>
    <scope>SU(VAR)205-BINDING MOTIF</scope>
    <scope>MUTAGENESIS OF PRO-298</scope>
</reference>
<reference evidence="23" key="9">
    <citation type="journal article" date="2003" name="Nat. Cell Biol.">
        <title>The Drosophila HOAP protein is required for telomere capping.</title>
        <authorList>
            <person name="Cenci G."/>
            <person name="Siriaco G."/>
            <person name="Raffa G.D."/>
            <person name="Kellum R."/>
            <person name="Gatti M."/>
        </authorList>
    </citation>
    <scope>FUNCTION</scope>
    <scope>SUBCELLULAR LOCATION</scope>
    <scope>DISRUPTION PHENOTYPE</scope>
</reference>
<reference evidence="23" key="10">
    <citation type="journal article" date="2009" name="Chromosome Res.">
        <title>Umbrea, a chromo shadow domain protein in Drosophila melanogaster heterochromatin, interacts with Hip, HP1 and HOAP.</title>
        <authorList>
            <person name="Joppich C."/>
            <person name="Scholz S."/>
            <person name="Korge G."/>
            <person name="Schwendemann A."/>
        </authorList>
    </citation>
    <scope>FUNCTION</scope>
    <scope>INTERACTION WITH HP6</scope>
</reference>
<reference key="11">
    <citation type="journal article" date="2009" name="J. Cell Sci.">
        <title>A product of the bicistronic Drosophila melanogaster gene CG31241, which also encodes a trimethylguanosine synthase, plays a role in telomere protection.</title>
        <authorList>
            <person name="Komonyi O."/>
            <person name="Schauer T."/>
            <person name="Papai G."/>
            <person name="Deak P."/>
            <person name="Boros I.M."/>
        </authorList>
    </citation>
    <scope>SUBCELLULAR LOCATION</scope>
</reference>
<reference evidence="23" key="12">
    <citation type="journal article" date="2009" name="Proc. Natl. Acad. Sci. U.S.A.">
        <title>The Drosophila modigliani (moi) gene encodes a HOAP-interacting protein required for telomere protection.</title>
        <authorList>
            <person name="Raffa G.D."/>
            <person name="Siriaco G."/>
            <person name="Cugusi S."/>
            <person name="Ciapponi L."/>
            <person name="Cenci G."/>
            <person name="Wojcik E."/>
            <person name="Gatti M."/>
        </authorList>
    </citation>
    <scope>FUNCTION</scope>
    <scope>INTERACTION WITH MOI AND SU(VAR)205</scope>
    <scope>SUBCELLULAR LOCATION</scope>
</reference>
<reference key="13">
    <citation type="journal article" date="2010" name="EMBO J.">
        <title>HipHop interacts with HOAP and HP1 to protect Drosophila telomeres in a sequence-independent manner.</title>
        <authorList>
            <person name="Gao G."/>
            <person name="Walser J.C."/>
            <person name="Beaucher M.L."/>
            <person name="Morciano P."/>
            <person name="Wesolowska N."/>
            <person name="Chen J."/>
            <person name="Rong Y.S."/>
        </authorList>
    </citation>
    <scope>FUNCTION</scope>
    <scope>IDENTIFICATION IN THE HIPHOP-HOAP COMPLEX</scope>
    <scope>INTERACTION WITH HIPHOP AND SU(VAR)205</scope>
    <scope>IDENTIFICATION BY MASS SPECTROMETRY</scope>
    <scope>SUBCELLULAR LOCATION</scope>
    <scope>DEVELOPMENTAL STAGE</scope>
</reference>
<reference key="14">
    <citation type="journal article" date="2010" name="Genes Dev.">
        <title>Verrocchio, a Drosophila OB fold-containing protein, is a component of the terminin telomere-capping complex.</title>
        <authorList>
            <person name="Raffa G.D."/>
            <person name="Raimondo D."/>
            <person name="Sorino C."/>
            <person name="Cugusi S."/>
            <person name="Cenci G."/>
            <person name="Cacchione S."/>
            <person name="Gatti M."/>
            <person name="Ciapponi L."/>
        </authorList>
    </citation>
    <scope>INTERACTION WITH VER</scope>
    <scope>SUBCELLULAR LOCATION</scope>
</reference>
<reference key="15">
    <citation type="journal article" date="2015" name="PLoS Genet.">
        <title>The Analysis of Pendolino (peo) Mutants Reveals Differences in the Fusigenic Potential among Drosophila Telomeres.</title>
        <authorList>
            <person name="Cenci G."/>
            <person name="Ciapponi L."/>
            <person name="Marzullo M."/>
            <person name="Raffa G.D."/>
            <person name="Morciano P."/>
            <person name="Raimondo D."/>
            <person name="Burla R."/>
            <person name="Saggio I."/>
            <person name="Gatti M."/>
        </authorList>
    </citation>
    <scope>INTERACTION WITH PEO</scope>
    <scope>SUBCELLULAR LOCATION</scope>
</reference>
<reference key="16">
    <citation type="journal article" date="2016" name="PLoS Genet.">
        <title>MTV, an ssDNA Protecting Complex Essential for Transposon-Based Telomere Maintenance in Drosophila.</title>
        <authorList>
            <person name="Zhang Y."/>
            <person name="Zhang L."/>
            <person name="Tang X."/>
            <person name="Bhardwaj S.R."/>
            <person name="Ji J."/>
            <person name="Rong Y.S."/>
        </authorList>
    </citation>
    <scope>SUBCELLULAR LOCATION</scope>
</reference>
<comment type="function">
    <text evidence="5 6 8 10 11 13">Part of the HipHop-HOAP complex that recruits the MTV complex to form the terminin telomere-capping complex, which binds to chromosome ends in a sequence-independent manner and prevents telomere fusion (PubMed:11408576, PubMed:12510197, PubMed:12826664, PubMed:19181850, PubMed:19190990, PubMed:20057353). Telomere capping is independent of the origin recognition complex (ORC) (PubMed:12510197).</text>
</comment>
<comment type="subunit">
    <text evidence="5 8 10 11 13 14 15">Component of the HipHop-HOAP telomere capping complex, composed of at least HipHop and cav/HOAP, and may include Su(var)205/HP1; HipHop and cav/HOAP, but not Su(var)205, are interdependent for their protein stability (PubMed:20057353). Interacts with HipHop (via N-terminus) (PubMed:20057353). Interacts (via C-terminus) with Su(var)205/HP1 dimer (via hinge and chromoshadow domain) and Orc1; possibly interacts with other components of the origin recognition complex (ORC) (PubMed:11408576, PubMed:12826664, PubMed:19181850). Each molecule of cav/HOAP interacts with 2 molecules of Su(var)205/HP1 (PubMed:12826664). The HipHop-HOAP complex recruits the MTV complex, consisting of moi/modigliani, tea and ver/verrocchio, to telomeres, forming the terminin telomere-capping complex (PubMed:19181850, PubMed:20679394). Interacts with moi/modigliani; the interaction is direct (PubMed:19181850). Interacts with ver/verrochio; the interaction is direct (PubMed:20679394). Interacts with HP6, which is also part of the terminin complex (PubMed:19190990). Interacts (via N-terminus) with peo/pendolino (via N-terminus); the interaction is direct (PubMed:26110638).</text>
</comment>
<comment type="interaction">
    <interactant intactId="EBI-104820">
        <id>Q95RV2</id>
    </interactant>
    <interactant intactId="EBI-103483">
        <id>Q7JWP6</id>
        <label>HipHop</label>
    </interactant>
    <organismsDiffer>false</organismsDiffer>
    <experiments>7</experiments>
</comment>
<comment type="interaction">
    <interactant intactId="EBI-104820">
        <id>Q95RV2</id>
    </interactant>
    <interactant intactId="EBI-15755079">
        <id>B7Z0L8</id>
        <label>moi</label>
    </interactant>
    <organismsDiffer>false</organismsDiffer>
    <experiments>2</experiments>
</comment>
<comment type="interaction">
    <interactant intactId="EBI-104820">
        <id>Q95RV2</id>
    </interactant>
    <interactant intactId="EBI-155532">
        <id>P05205</id>
        <label>Su(var)205</label>
    </interactant>
    <organismsDiffer>false</organismsDiffer>
    <experiments>5</experiments>
</comment>
<comment type="interaction">
    <interactant intactId="EBI-15131910">
        <id>Q95RV2-3</id>
    </interactant>
    <interactant intactId="EBI-89630">
        <id>Q9W396</id>
        <label>HP1b</label>
    </interactant>
    <organismsDiffer>false</organismsDiffer>
    <experiments>4</experiments>
</comment>
<comment type="interaction">
    <interactant intactId="EBI-15131910">
        <id>Q95RV2-3</id>
    </interactant>
    <interactant intactId="EBI-103911">
        <id>Q9VR09</id>
        <label>HP6</label>
    </interactant>
    <organismsDiffer>false</organismsDiffer>
    <experiments>4</experiments>
</comment>
<comment type="subcellular location">
    <subcellularLocation>
        <location evidence="5 6 8 10 12 13 14 15 16">Nucleus</location>
    </subcellularLocation>
    <subcellularLocation>
        <location evidence="5 6 8 10 12 13 14 15 16">Chromosome</location>
    </subcellularLocation>
    <subcellularLocation>
        <location evidence="5 6 8 10 12 13 14 15 16">Chromosome</location>
        <location evidence="5 6 8 10 12 13 14 15 16">Telomere</location>
    </subcellularLocation>
    <text evidence="5 6 8 10 12 13 14 15 16">Enriched at interphase, polytene and mitotic chromosome telomeres (PubMed:11408576, PubMed:12510197, PubMed:12826664, PubMed:19181850, PubMed:20057353, PubMed:26110638). Localized predominantly at telomeres and diffusely throughout regions of pericentric heterochromatin (PubMed:11408576, PubMed:12510197, PubMed:12826664, PubMed:19181850). Colocalizes with moi/modigliani at telomeres (PubMed:19181850). Telomere localization is not dependent on peo/pendolino, tea, ver/verrocchio or moi/modigliani (PubMed:19181850, PubMed:19240120, PubMed:20679394, PubMed:26110638, PubMed:27835648). Telomere localization is enhanced by, but not dependent on, Su(var)205/HP1 (PubMed:12510197). Telomere localization is enhanced by the activity of tefu/ATM and the MRN complex (PubMed:20057353).</text>
</comment>
<comment type="alternative products">
    <event type="alternative splicing"/>
    <isoform>
        <id>Q95RV2-1</id>
        <name evidence="4">A</name>
        <sequence type="displayed"/>
    </isoform>
    <isoform>
        <id>Q95RV2-2</id>
        <name evidence="17">B</name>
        <name evidence="4">D</name>
        <sequence type="described" ref="VSP_053126"/>
    </isoform>
    <isoform>
        <id>Q95RV2-3</id>
        <name evidence="4">E</name>
        <sequence type="described" ref="VSP_053127"/>
    </isoform>
</comment>
<comment type="developmental stage">
    <text evidence="5 13">Expressed both maternally and zygotically (PubMed:11408576). Expressed in larval salivary glands (at protein level) (PubMed:20057353).</text>
</comment>
<comment type="disruption phenotype">
    <text evidence="6">Death at the larval/pupal boundary due to extensive telomere-telomere fusions in larval brain cells.</text>
</comment>
<comment type="miscellaneous">
    <text evidence="6">Multiple telomeric associations (TAs) in the same metaphase spread often result in multicentric linear chromosomes that resemble little 'trains' of chromosomes, hence the name 'caravaggio', the name of an Italian train named after the artist.</text>
</comment>
<comment type="sequence caution" evidence="23">
    <conflict type="erroneous initiation">
        <sequence resource="EMBL-CDS" id="AAB62252"/>
    </conflict>
</comment>
<comment type="sequence caution" evidence="23">
    <conflict type="erroneous initiation">
        <sequence resource="EMBL-CDS" id="AAB62253"/>
    </conflict>
</comment>
<comment type="sequence caution" evidence="23">
    <conflict type="erroneous initiation">
        <sequence resource="EMBL-CDS" id="AAB62254"/>
    </conflict>
</comment>
<comment type="sequence caution" evidence="23">
    <conflict type="erroneous initiation">
        <sequence resource="EMBL-CDS" id="AAB62255"/>
    </conflict>
</comment>
<comment type="sequence caution" evidence="23">
    <conflict type="erroneous initiation">
        <sequence resource="EMBL-CDS" id="AAB62256"/>
    </conflict>
</comment>
<comment type="sequence caution" evidence="23">
    <conflict type="erroneous initiation">
        <sequence resource="EMBL-CDS" id="AAB62257"/>
    </conflict>
</comment>
<comment type="sequence caution" evidence="23">
    <conflict type="erroneous initiation">
        <sequence resource="EMBL-CDS" id="AAB62258"/>
    </conflict>
</comment>
<comment type="sequence caution" evidence="23">
    <conflict type="erroneous initiation">
        <sequence resource="EMBL-CDS" id="AAB62259"/>
    </conflict>
</comment>
<comment type="sequence caution" evidence="23">
    <conflict type="erroneous initiation">
        <sequence resource="EMBL-CDS" id="AAB62260"/>
    </conflict>
</comment>
<comment type="sequence caution" evidence="23">
    <conflict type="erroneous initiation">
        <sequence resource="EMBL-CDS" id="AAB62265"/>
    </conflict>
</comment>
<comment type="sequence caution" evidence="23">
    <conflict type="erroneous initiation">
        <sequence resource="EMBL-CDS" id="AAB62266"/>
    </conflict>
</comment>
<comment type="sequence caution" evidence="23">
    <conflict type="erroneous initiation">
        <sequence resource="EMBL-CDS" id="AAB62267"/>
    </conflict>
</comment>
<comment type="sequence caution" evidence="23">
    <conflict type="erroneous initiation">
        <sequence resource="EMBL-CDS" id="AAB62268"/>
    </conflict>
</comment>
<feature type="chain" id="PRO_0000379489" description="Telomere-binding protein cav">
    <location>
        <begin position="1"/>
        <end position="345"/>
    </location>
</feature>
<feature type="region of interest" description="Required for binding to Su(var)205" evidence="8">
    <location>
        <begin position="115"/>
        <end position="337"/>
    </location>
</feature>
<feature type="region of interest" description="Disordered" evidence="2">
    <location>
        <begin position="145"/>
        <end position="180"/>
    </location>
</feature>
<feature type="region of interest" description="Disordered" evidence="2">
    <location>
        <begin position="200"/>
        <end position="231"/>
    </location>
</feature>
<feature type="short sequence motif" description="Su(var)205-binding Pro-containing repeat 1" evidence="1 8">
    <location>
        <begin position="231"/>
        <end position="237"/>
    </location>
</feature>
<feature type="short sequence motif" description="Su(var)205-binding Pro-containing repeat 2" evidence="1 8">
    <location>
        <begin position="298"/>
        <end position="304"/>
    </location>
</feature>
<feature type="splice variant" id="VSP_053126" description="In isoform B." evidence="22">
    <location>
        <begin position="1"/>
        <end position="8"/>
    </location>
</feature>
<feature type="splice variant" id="VSP_053127" description="In isoform E." evidence="19">
    <original>LLLLC</original>
    <variation>VKE</variation>
    <location>
        <begin position="2"/>
        <end position="6"/>
    </location>
</feature>
<feature type="sequence variant" description="In strain: NC350 and NC358." evidence="9">
    <original>K</original>
    <variation>N</variation>
    <location>
        <position position="27"/>
    </location>
</feature>
<feature type="sequence variant" description="In strain: Canton-S." evidence="17">
    <original>S</original>
    <variation>T</variation>
    <location>
        <position position="144"/>
    </location>
</feature>
<feature type="sequence variant" description="In strain: Canton-S." evidence="17">
    <original>W</original>
    <variation>C</variation>
    <location>
        <position position="149"/>
    </location>
</feature>
<feature type="sequence variant" description="In strain: Australia 2, Kenya 38, Kenya 43, Peru and USA 3." evidence="3 17">
    <original>S</original>
    <variation>T</variation>
    <location>
        <position position="154"/>
    </location>
</feature>
<feature type="sequence variant" description="In strain: Australia 5." evidence="17">
    <original>M</original>
    <variation>I</variation>
    <location>
        <position position="198"/>
    </location>
</feature>
<feature type="sequence variant" description="In strain: Japan." evidence="17">
    <original>N</original>
    <variation>Y</variation>
    <location>
        <position position="236"/>
    </location>
</feature>
<feature type="sequence variant" description="In strain: Australia 5 and USA 1." evidence="17">
    <original>Y</original>
    <variation>F</variation>
    <location>
        <position position="273"/>
    </location>
</feature>
<feature type="mutagenesis site" description="Prevents binding to HP1 hinge domain but no effect on binding to HP1 chromoshadow domain." evidence="8">
    <original>P</original>
    <variation>E</variation>
    <location>
        <position position="298"/>
    </location>
</feature>
<name>CAV_DROME</name>
<sequence>MLLLLCVNMSGTQMSAFLRKYLADEDKKIRAQFKESDPNNKLILWMHEKTRITEEDLARPYTEDEVKELCLRTKVKVDMTAWNCLWEAKKRFEAKGRFVNKSERFINRMYMKAVRRKMVQPYPEEFVAQRREIVAAETKKQNISRLDRWQKKKSQNLSAPESSPDAHASSNDAVQSHEDQANTNLSSLSQMNFQVEAMAPPGVSSSDLSGIGDDEDEQQQSGFQDENINRPETEINENSVRCDPINLGRMRTGCINSQANNSFRNTESDPDYYMFGTQLSTLVRPTSTQEPDDQVNCPETEMNESWVRCDQINSESLSIGPSIDSEGTITFQNTESEPIDVTSIA</sequence>
<dbReference type="EMBL" id="AF005851">
    <property type="protein sequence ID" value="AAB81482.1"/>
    <property type="molecule type" value="mRNA"/>
</dbReference>
<dbReference type="EMBL" id="AF005865">
    <property type="protein sequence ID" value="AAB62252.1"/>
    <property type="status" value="ALT_INIT"/>
    <property type="molecule type" value="Genomic_DNA"/>
</dbReference>
<dbReference type="EMBL" id="AF005866">
    <property type="protein sequence ID" value="AAB62253.1"/>
    <property type="status" value="ALT_INIT"/>
    <property type="molecule type" value="Genomic_DNA"/>
</dbReference>
<dbReference type="EMBL" id="AF005867">
    <property type="protein sequence ID" value="AAB62254.1"/>
    <property type="status" value="ALT_INIT"/>
    <property type="molecule type" value="Genomic_DNA"/>
</dbReference>
<dbReference type="EMBL" id="AF005868">
    <property type="protein sequence ID" value="AAB62255.1"/>
    <property type="status" value="ALT_INIT"/>
    <property type="molecule type" value="Genomic_DNA"/>
</dbReference>
<dbReference type="EMBL" id="AF005869">
    <property type="protein sequence ID" value="AAB62256.1"/>
    <property type="status" value="ALT_INIT"/>
    <property type="molecule type" value="Genomic_DNA"/>
</dbReference>
<dbReference type="EMBL" id="AF005870">
    <property type="protein sequence ID" value="AAB62257.1"/>
    <property type="status" value="ALT_INIT"/>
    <property type="molecule type" value="Genomic_DNA"/>
</dbReference>
<dbReference type="EMBL" id="AF005871">
    <property type="protein sequence ID" value="AAB62258.1"/>
    <property type="status" value="ALT_INIT"/>
    <property type="molecule type" value="Genomic_DNA"/>
</dbReference>
<dbReference type="EMBL" id="AF005872">
    <property type="protein sequence ID" value="AAB62259.1"/>
    <property type="status" value="ALT_INIT"/>
    <property type="molecule type" value="Genomic_DNA"/>
</dbReference>
<dbReference type="EMBL" id="AF005873">
    <property type="protein sequence ID" value="AAB62260.1"/>
    <property type="status" value="ALT_INIT"/>
    <property type="molecule type" value="Genomic_DNA"/>
</dbReference>
<dbReference type="EMBL" id="AF005878">
    <property type="protein sequence ID" value="AAB62265.1"/>
    <property type="status" value="ALT_INIT"/>
    <property type="molecule type" value="Genomic_DNA"/>
</dbReference>
<dbReference type="EMBL" id="AF005879">
    <property type="protein sequence ID" value="AAB62266.1"/>
    <property type="status" value="ALT_INIT"/>
    <property type="molecule type" value="Genomic_DNA"/>
</dbReference>
<dbReference type="EMBL" id="AF005880">
    <property type="protein sequence ID" value="AAB62267.1"/>
    <property type="status" value="ALT_INIT"/>
    <property type="molecule type" value="Genomic_DNA"/>
</dbReference>
<dbReference type="EMBL" id="AF005881">
    <property type="protein sequence ID" value="AAB62268.1"/>
    <property type="status" value="ALT_INIT"/>
    <property type="molecule type" value="Genomic_DNA"/>
</dbReference>
<dbReference type="EMBL" id="AE014297">
    <property type="protein sequence ID" value="AAF56260.1"/>
    <property type="molecule type" value="Genomic_DNA"/>
</dbReference>
<dbReference type="EMBL" id="AE014297">
    <property type="protein sequence ID" value="AAN13988.2"/>
    <property type="molecule type" value="Genomic_DNA"/>
</dbReference>
<dbReference type="EMBL" id="AE014297">
    <property type="protein sequence ID" value="AAN13989.1"/>
    <property type="molecule type" value="Genomic_DNA"/>
</dbReference>
<dbReference type="EMBL" id="AE014297">
    <property type="protein sequence ID" value="AAN13990.2"/>
    <property type="molecule type" value="Genomic_DNA"/>
</dbReference>
<dbReference type="EMBL" id="AY061114">
    <property type="protein sequence ID" value="AAL28662.1"/>
    <property type="molecule type" value="mRNA"/>
</dbReference>
<dbReference type="EMBL" id="FJ218758">
    <property type="protein sequence ID" value="ACI96383.1"/>
    <property type="molecule type" value="Genomic_DNA"/>
</dbReference>
<dbReference type="EMBL" id="FJ218763">
    <property type="protein sequence ID" value="ACI96388.1"/>
    <property type="molecule type" value="Genomic_DNA"/>
</dbReference>
<dbReference type="EMBL" id="FJ218764">
    <property type="protein sequence ID" value="ACI96389.1"/>
    <property type="molecule type" value="Genomic_DNA"/>
</dbReference>
<dbReference type="EMBL" id="FJ218765">
    <property type="protein sequence ID" value="ACI96390.1"/>
    <property type="molecule type" value="Genomic_DNA"/>
</dbReference>
<dbReference type="EMBL" id="FJ218766">
    <property type="protein sequence ID" value="ACI96391.1"/>
    <property type="molecule type" value="Genomic_DNA"/>
</dbReference>
<dbReference type="EMBL" id="FJ218767">
    <property type="protein sequence ID" value="ACI96392.1"/>
    <property type="molecule type" value="Genomic_DNA"/>
</dbReference>
<dbReference type="EMBL" id="FJ218768">
    <property type="protein sequence ID" value="ACI96393.1"/>
    <property type="molecule type" value="Genomic_DNA"/>
</dbReference>
<dbReference type="EMBL" id="FJ218769">
    <property type="protein sequence ID" value="ACI96394.1"/>
    <property type="molecule type" value="Genomic_DNA"/>
</dbReference>
<dbReference type="EMBL" id="FJ218770">
    <property type="protein sequence ID" value="ACI96395.1"/>
    <property type="molecule type" value="Genomic_DNA"/>
</dbReference>
<dbReference type="EMBL" id="FJ218771">
    <property type="protein sequence ID" value="ACI96396.1"/>
    <property type="molecule type" value="Genomic_DNA"/>
</dbReference>
<dbReference type="EMBL" id="FJ218772">
    <property type="protein sequence ID" value="ACI96397.1"/>
    <property type="molecule type" value="Genomic_DNA"/>
</dbReference>
<dbReference type="EMBL" id="FJ218773">
    <property type="protein sequence ID" value="ACI96398.1"/>
    <property type="molecule type" value="Genomic_DNA"/>
</dbReference>
<dbReference type="EMBL" id="FJ218774">
    <property type="protein sequence ID" value="ACI96399.1"/>
    <property type="molecule type" value="Genomic_DNA"/>
</dbReference>
<dbReference type="EMBL" id="FJ218775">
    <property type="protein sequence ID" value="ACI96400.1"/>
    <property type="molecule type" value="Genomic_DNA"/>
</dbReference>
<dbReference type="EMBL" id="FJ218776">
    <property type="protein sequence ID" value="ACI96401.1"/>
    <property type="molecule type" value="Genomic_DNA"/>
</dbReference>
<dbReference type="EMBL" id="FJ218777">
    <property type="protein sequence ID" value="ACI96402.1"/>
    <property type="molecule type" value="Genomic_DNA"/>
</dbReference>
<dbReference type="EMBL" id="FJ218778">
    <property type="protein sequence ID" value="ACI96403.1"/>
    <property type="molecule type" value="Genomic_DNA"/>
</dbReference>
<dbReference type="EMBL" id="FJ218779">
    <property type="protein sequence ID" value="ACI96404.1"/>
    <property type="molecule type" value="Genomic_DNA"/>
</dbReference>
<dbReference type="EMBL" id="FJ218780">
    <property type="protein sequence ID" value="ACI96405.1"/>
    <property type="molecule type" value="Genomic_DNA"/>
</dbReference>
<dbReference type="EMBL" id="FJ218781">
    <property type="protein sequence ID" value="ACI96406.1"/>
    <property type="molecule type" value="Genomic_DNA"/>
</dbReference>
<dbReference type="EMBL" id="FJ218782">
    <property type="protein sequence ID" value="ACI96407.1"/>
    <property type="molecule type" value="Genomic_DNA"/>
</dbReference>
<dbReference type="EMBL" id="FJ218783">
    <property type="protein sequence ID" value="ACI96408.1"/>
    <property type="molecule type" value="Genomic_DNA"/>
</dbReference>
<dbReference type="EMBL" id="FJ218784">
    <property type="protein sequence ID" value="ACI96409.1"/>
    <property type="molecule type" value="Genomic_DNA"/>
</dbReference>
<dbReference type="EMBL" id="FJ218785">
    <property type="protein sequence ID" value="ACI96410.1"/>
    <property type="molecule type" value="Genomic_DNA"/>
</dbReference>
<dbReference type="EMBL" id="FJ218786">
    <property type="protein sequence ID" value="ACI96411.1"/>
    <property type="molecule type" value="Genomic_DNA"/>
</dbReference>
<dbReference type="EMBL" id="AF161784">
    <property type="protein sequence ID" value="AAD45788.1"/>
    <property type="molecule type" value="Genomic_DNA"/>
</dbReference>
<dbReference type="EMBL" id="AF161785">
    <property type="protein sequence ID" value="AAD45789.1"/>
    <property type="molecule type" value="Genomic_DNA"/>
</dbReference>
<dbReference type="EMBL" id="AF161786">
    <property type="protein sequence ID" value="AAD45790.1"/>
    <property type="molecule type" value="Genomic_DNA"/>
</dbReference>
<dbReference type="RefSeq" id="NP_524477.3">
    <molecule id="Q95RV2-1"/>
    <property type="nucleotide sequence ID" value="NM_079753.4"/>
</dbReference>
<dbReference type="RefSeq" id="NP_732969.1">
    <molecule id="Q95RV2-2"/>
    <property type="nucleotide sequence ID" value="NM_170133.2"/>
</dbReference>
<dbReference type="RefSeq" id="NP_732970.1">
    <molecule id="Q95RV2-2"/>
    <property type="nucleotide sequence ID" value="NM_170134.2"/>
</dbReference>
<dbReference type="RefSeq" id="NP_732971.2">
    <molecule id="Q95RV2-3"/>
    <property type="nucleotide sequence ID" value="NM_170135.2"/>
</dbReference>
<dbReference type="BioGRID" id="67812">
    <property type="interactions" value="17"/>
</dbReference>
<dbReference type="ComplexPortal" id="CPX-8939">
    <property type="entry name" value="HipHop-HOAP telomere-capping complex"/>
</dbReference>
<dbReference type="DIP" id="DIP-48712N"/>
<dbReference type="FunCoup" id="Q95RV2">
    <property type="interactions" value="124"/>
</dbReference>
<dbReference type="IntAct" id="Q95RV2">
    <property type="interactions" value="5"/>
</dbReference>
<dbReference type="MINT" id="Q95RV2"/>
<dbReference type="STRING" id="7227.FBpp0083943"/>
<dbReference type="PaxDb" id="7227-FBpp0083943"/>
<dbReference type="DNASU" id="42881"/>
<dbReference type="EnsemblMetazoa" id="FBtr0084556">
    <molecule id="Q95RV2-3"/>
    <property type="protein sequence ID" value="FBpp0083941"/>
    <property type="gene ID" value="FBgn0026257"/>
</dbReference>
<dbReference type="EnsemblMetazoa" id="FBtr0084557">
    <molecule id="Q95RV2-2"/>
    <property type="protein sequence ID" value="FBpp0083942"/>
    <property type="gene ID" value="FBgn0026257"/>
</dbReference>
<dbReference type="EnsemblMetazoa" id="FBtr0084558">
    <molecule id="Q95RV2-1"/>
    <property type="protein sequence ID" value="FBpp0083943"/>
    <property type="gene ID" value="FBgn0026257"/>
</dbReference>
<dbReference type="EnsemblMetazoa" id="FBtr0084559">
    <molecule id="Q95RV2-2"/>
    <property type="protein sequence ID" value="FBpp0083944"/>
    <property type="gene ID" value="FBgn0026257"/>
</dbReference>
<dbReference type="GeneID" id="42881"/>
<dbReference type="KEGG" id="dme:Dmel_CG6219"/>
<dbReference type="UCSC" id="CG6219-RA">
    <molecule id="Q95RV2-1"/>
    <property type="organism name" value="d. melanogaster"/>
</dbReference>
<dbReference type="UCSC" id="CG6219-RB">
    <property type="organism name" value="d. melanogaster"/>
</dbReference>
<dbReference type="UCSC" id="CG6219-RE">
    <property type="organism name" value="d. melanogaster"/>
</dbReference>
<dbReference type="AGR" id="FB:FBgn0026257"/>
<dbReference type="CTD" id="42881"/>
<dbReference type="FlyBase" id="FBgn0026257">
    <property type="gene designation" value="cav"/>
</dbReference>
<dbReference type="VEuPathDB" id="VectorBase:FBgn0026257"/>
<dbReference type="eggNOG" id="ENOG502RN8H">
    <property type="taxonomic scope" value="Eukaryota"/>
</dbReference>
<dbReference type="HOGENOM" id="CLU_059636_0_0_1"/>
<dbReference type="InParanoid" id="Q95RV2"/>
<dbReference type="OMA" id="QINSESM"/>
<dbReference type="OrthoDB" id="7934455at2759"/>
<dbReference type="PhylomeDB" id="Q95RV2"/>
<dbReference type="SignaLink" id="Q95RV2"/>
<dbReference type="BioGRID-ORCS" id="42881">
    <property type="hits" value="0 hits in 1 CRISPR screen"/>
</dbReference>
<dbReference type="ChiTaRS" id="cav">
    <property type="organism name" value="fly"/>
</dbReference>
<dbReference type="GenomeRNAi" id="42881"/>
<dbReference type="PRO" id="PR:Q95RV2"/>
<dbReference type="Proteomes" id="UP000000803">
    <property type="component" value="Chromosome 3R"/>
</dbReference>
<dbReference type="Bgee" id="FBgn0026257">
    <property type="expression patterns" value="Expressed in dorsal appendage forming follicle cell in ovary and 202 other cell types or tissues"/>
</dbReference>
<dbReference type="ExpressionAtlas" id="Q95RV2">
    <property type="expression patterns" value="baseline and differential"/>
</dbReference>
<dbReference type="GO" id="GO:0000775">
    <property type="term" value="C:chromosome, centromeric region"/>
    <property type="evidence" value="ECO:0000314"/>
    <property type="project" value="FlyBase"/>
</dbReference>
<dbReference type="GO" id="GO:0000781">
    <property type="term" value="C:chromosome, telomeric region"/>
    <property type="evidence" value="ECO:0000314"/>
    <property type="project" value="FlyBase"/>
</dbReference>
<dbReference type="GO" id="GO:0005634">
    <property type="term" value="C:nucleus"/>
    <property type="evidence" value="ECO:0000314"/>
    <property type="project" value="FlyBase"/>
</dbReference>
<dbReference type="GO" id="GO:0000782">
    <property type="term" value="C:telomere cap complex"/>
    <property type="evidence" value="ECO:0000314"/>
    <property type="project" value="UniProtKB"/>
</dbReference>
<dbReference type="GO" id="GO:0042162">
    <property type="term" value="F:telomeric DNA binding"/>
    <property type="evidence" value="ECO:0000315"/>
    <property type="project" value="UniProtKB"/>
</dbReference>
<dbReference type="GO" id="GO:0016233">
    <property type="term" value="P:telomere capping"/>
    <property type="evidence" value="ECO:0000315"/>
    <property type="project" value="UniProtKB"/>
</dbReference>
<dbReference type="GO" id="GO:0000723">
    <property type="term" value="P:telomere maintenance"/>
    <property type="evidence" value="ECO:0000315"/>
    <property type="project" value="FlyBase"/>
</dbReference>
<organism evidence="69">
    <name type="scientific">Drosophila melanogaster</name>
    <name type="common">Fruit fly</name>
    <dbReference type="NCBI Taxonomy" id="7227"/>
    <lineage>
        <taxon>Eukaryota</taxon>
        <taxon>Metazoa</taxon>
        <taxon>Ecdysozoa</taxon>
        <taxon>Arthropoda</taxon>
        <taxon>Hexapoda</taxon>
        <taxon>Insecta</taxon>
        <taxon>Pterygota</taxon>
        <taxon>Neoptera</taxon>
        <taxon>Endopterygota</taxon>
        <taxon>Diptera</taxon>
        <taxon>Brachycera</taxon>
        <taxon>Muscomorpha</taxon>
        <taxon>Ephydroidea</taxon>
        <taxon>Drosophilidae</taxon>
        <taxon>Drosophila</taxon>
        <taxon>Sophophora</taxon>
    </lineage>
</organism>
<accession>Q95RV2</accession>
<accession>B6UW60</accession>
<accession>B6UW70</accession>
<accession>B6UW72</accession>
<accession>B6UW76</accession>
<accession>B6UW79</accession>
<accession>B6UW88</accession>
<accession>O16046</accession>
<accession>O18360</accession>
<accession>O18361</accession>
<accession>O18362</accession>
<accession>O18667</accession>
<accession>O18675</accession>
<accession>Q7KLS0</accession>
<accession>Q7KQE4</accession>
<accession>Q7KQE8</accession>
<accession>Q86BN7</accession>
<accession>Q9TVU4</accession>
<accession>Q9U4P0</accession>
<accession>Q9VCB3</accession>
<protein>
    <recommendedName>
        <fullName evidence="21">Telomere-binding protein cav</fullName>
    </recommendedName>
    <alternativeName>
        <fullName evidence="21">Anonymous fast evolving 1G5</fullName>
    </alternativeName>
    <alternativeName>
        <fullName evidence="20">HP1/ORC-associated protein</fullName>
        <shortName evidence="20">HOAP p55</shortName>
    </alternativeName>
    <alternativeName>
        <fullName evidence="21">Protein caravaggio</fullName>
    </alternativeName>
</protein>
<keyword id="KW-0025">Alternative splicing</keyword>
<keyword id="KW-0158">Chromosome</keyword>
<keyword id="KW-0903">Direct protein sequencing</keyword>
<keyword id="KW-0238">DNA-binding</keyword>
<keyword id="KW-0539">Nucleus</keyword>
<keyword id="KW-1185">Reference proteome</keyword>
<keyword id="KW-0677">Repeat</keyword>
<keyword id="KW-0779">Telomere</keyword>
<proteinExistence type="evidence at protein level"/>
<evidence type="ECO:0000255" key="1"/>
<evidence type="ECO:0000256" key="2">
    <source>
        <dbReference type="SAM" id="MobiDB-lite"/>
    </source>
</evidence>
<evidence type="ECO:0000269" key="3">
    <source>
    </source>
</evidence>
<evidence type="ECO:0000269" key="4">
    <source>
    </source>
</evidence>
<evidence type="ECO:0000269" key="5">
    <source>
    </source>
</evidence>
<evidence type="ECO:0000269" key="6">
    <source>
    </source>
</evidence>
<evidence type="ECO:0000269" key="7">
    <source>
    </source>
</evidence>
<evidence type="ECO:0000269" key="8">
    <source>
    </source>
</evidence>
<evidence type="ECO:0000269" key="9">
    <source>
    </source>
</evidence>
<evidence type="ECO:0000269" key="10">
    <source>
    </source>
</evidence>
<evidence type="ECO:0000269" key="11">
    <source>
    </source>
</evidence>
<evidence type="ECO:0000269" key="12">
    <source>
    </source>
</evidence>
<evidence type="ECO:0000269" key="13">
    <source>
    </source>
</evidence>
<evidence type="ECO:0000269" key="14">
    <source>
    </source>
</evidence>
<evidence type="ECO:0000269" key="15">
    <source>
    </source>
</evidence>
<evidence type="ECO:0000269" key="16">
    <source>
    </source>
</evidence>
<evidence type="ECO:0000269" key="17">
    <source>
    </source>
</evidence>
<evidence type="ECO:0000303" key="18">
    <source>
    </source>
</evidence>
<evidence type="ECO:0000303" key="19">
    <source>
    </source>
</evidence>
<evidence type="ECO:0000303" key="20">
    <source>
    </source>
</evidence>
<evidence type="ECO:0000303" key="21">
    <source>
    </source>
</evidence>
<evidence type="ECO:0000303" key="22">
    <source>
    </source>
</evidence>
<evidence type="ECO:0000305" key="23"/>
<evidence type="ECO:0000312" key="24">
    <source>
        <dbReference type="EMBL" id="AAB62252.1"/>
    </source>
</evidence>
<evidence type="ECO:0000312" key="25">
    <source>
        <dbReference type="EMBL" id="AAB62253.1"/>
    </source>
</evidence>
<evidence type="ECO:0000312" key="26">
    <source>
        <dbReference type="EMBL" id="AAB62254.1"/>
    </source>
</evidence>
<evidence type="ECO:0000312" key="27">
    <source>
        <dbReference type="EMBL" id="AAB62255.1"/>
    </source>
</evidence>
<evidence type="ECO:0000312" key="28">
    <source>
        <dbReference type="EMBL" id="AAB62256.1"/>
    </source>
</evidence>
<evidence type="ECO:0000312" key="29">
    <source>
        <dbReference type="EMBL" id="AAB62257.1"/>
    </source>
</evidence>
<evidence type="ECO:0000312" key="30">
    <source>
        <dbReference type="EMBL" id="AAB62258.1"/>
    </source>
</evidence>
<evidence type="ECO:0000312" key="31">
    <source>
        <dbReference type="EMBL" id="AAB62259.1"/>
    </source>
</evidence>
<evidence type="ECO:0000312" key="32">
    <source>
        <dbReference type="EMBL" id="AAB62260.1"/>
    </source>
</evidence>
<evidence type="ECO:0000312" key="33">
    <source>
        <dbReference type="EMBL" id="AAB62265.1"/>
    </source>
</evidence>
<evidence type="ECO:0000312" key="34">
    <source>
        <dbReference type="EMBL" id="AAB62266.1"/>
    </source>
</evidence>
<evidence type="ECO:0000312" key="35">
    <source>
        <dbReference type="EMBL" id="AAB62267.1"/>
    </source>
</evidence>
<evidence type="ECO:0000312" key="36">
    <source>
        <dbReference type="EMBL" id="AAB62268.1"/>
    </source>
</evidence>
<evidence type="ECO:0000312" key="37">
    <source>
        <dbReference type="EMBL" id="AAB81482.1"/>
    </source>
</evidence>
<evidence type="ECO:0000312" key="38">
    <source>
        <dbReference type="EMBL" id="AAD45788.1"/>
    </source>
</evidence>
<evidence type="ECO:0000312" key="39">
    <source>
        <dbReference type="EMBL" id="AAD45789.1"/>
    </source>
</evidence>
<evidence type="ECO:0000312" key="40">
    <source>
        <dbReference type="EMBL" id="AAD45790.1"/>
    </source>
</evidence>
<evidence type="ECO:0000312" key="41">
    <source>
        <dbReference type="EMBL" id="AAL28662.1"/>
    </source>
</evidence>
<evidence type="ECO:0000312" key="42">
    <source>
        <dbReference type="EMBL" id="AAN13988.2"/>
    </source>
</evidence>
<evidence type="ECO:0000312" key="43">
    <source>
        <dbReference type="EMBL" id="ACI96383.1"/>
    </source>
</evidence>
<evidence type="ECO:0000312" key="44">
    <source>
        <dbReference type="EMBL" id="ACI96388.1"/>
    </source>
</evidence>
<evidence type="ECO:0000312" key="45">
    <source>
        <dbReference type="EMBL" id="ACI96389.1"/>
    </source>
</evidence>
<evidence type="ECO:0000312" key="46">
    <source>
        <dbReference type="EMBL" id="ACI96390.1"/>
    </source>
</evidence>
<evidence type="ECO:0000312" key="47">
    <source>
        <dbReference type="EMBL" id="ACI96391.1"/>
    </source>
</evidence>
<evidence type="ECO:0000312" key="48">
    <source>
        <dbReference type="EMBL" id="ACI96392.1"/>
    </source>
</evidence>
<evidence type="ECO:0000312" key="49">
    <source>
        <dbReference type="EMBL" id="ACI96393.1"/>
    </source>
</evidence>
<evidence type="ECO:0000312" key="50">
    <source>
        <dbReference type="EMBL" id="ACI96394.1"/>
    </source>
</evidence>
<evidence type="ECO:0000312" key="51">
    <source>
        <dbReference type="EMBL" id="ACI96395.1"/>
    </source>
</evidence>
<evidence type="ECO:0000312" key="52">
    <source>
        <dbReference type="EMBL" id="ACI96396.1"/>
    </source>
</evidence>
<evidence type="ECO:0000312" key="53">
    <source>
        <dbReference type="EMBL" id="ACI96397.1"/>
    </source>
</evidence>
<evidence type="ECO:0000312" key="54">
    <source>
        <dbReference type="EMBL" id="ACI96398.1"/>
    </source>
</evidence>
<evidence type="ECO:0000312" key="55">
    <source>
        <dbReference type="EMBL" id="ACI96399.1"/>
    </source>
</evidence>
<evidence type="ECO:0000312" key="56">
    <source>
        <dbReference type="EMBL" id="ACI96400.1"/>
    </source>
</evidence>
<evidence type="ECO:0000312" key="57">
    <source>
        <dbReference type="EMBL" id="ACI96401.1"/>
    </source>
</evidence>
<evidence type="ECO:0000312" key="58">
    <source>
        <dbReference type="EMBL" id="ACI96402.1"/>
    </source>
</evidence>
<evidence type="ECO:0000312" key="59">
    <source>
        <dbReference type="EMBL" id="ACI96403.1"/>
    </source>
</evidence>
<evidence type="ECO:0000312" key="60">
    <source>
        <dbReference type="EMBL" id="ACI96404.1"/>
    </source>
</evidence>
<evidence type="ECO:0000312" key="61">
    <source>
        <dbReference type="EMBL" id="ACI96405.1"/>
    </source>
</evidence>
<evidence type="ECO:0000312" key="62">
    <source>
        <dbReference type="EMBL" id="ACI96406.1"/>
    </source>
</evidence>
<evidence type="ECO:0000312" key="63">
    <source>
        <dbReference type="EMBL" id="ACI96407.1"/>
    </source>
</evidence>
<evidence type="ECO:0000312" key="64">
    <source>
        <dbReference type="EMBL" id="ACI96408.1"/>
    </source>
</evidence>
<evidence type="ECO:0000312" key="65">
    <source>
        <dbReference type="EMBL" id="ACI96409.1"/>
    </source>
</evidence>
<evidence type="ECO:0000312" key="66">
    <source>
        <dbReference type="EMBL" id="ACI96410.1"/>
    </source>
</evidence>
<evidence type="ECO:0000312" key="67">
    <source>
        <dbReference type="EMBL" id="ACI96411.1"/>
    </source>
</evidence>
<evidence type="ECO:0000312" key="68">
    <source>
        <dbReference type="FlyBase" id="FBgn0026257"/>
    </source>
</evidence>
<evidence type="ECO:0000312" key="69">
    <source>
        <dbReference type="Proteomes" id="UP000000803"/>
    </source>
</evidence>